<sequence length="915" mass="103671">MFAPLLRVLFGSKNDREVKRMRRAVRAINALEEQMVALTDEQLRAKTEEFRGRLGKGETLDQLLPEAFAVAREAGKRVMGMRHFDVQLIGGMVLHEGKIAEMRTGEGKTLVATLAVYLNALAGKGVHVVTVNDYLARRDANWMRPLYEFLGLSVGVVTPFQPPEEKRAAYAADITYGTNNEFGFDYLRDNMAFSLEDKFQRELNYAVIDEVDSILIDEARTPLIISGQAEDSSQLYLQINALIPRLKRHIEEEEGVVTQEGHYVVDEKTRQIELNEQGHQFIEELLASAGLLPEGDNLYSAHNLQLLTHVYAGLRAHVLFHRNVEYIVQGNQVLLIDEHTGRTMQGRRLSEGLHQAIEAKEGLPIQAESQTLASTTFQNYFRLYHKLAGMTGTADTEAFEFRQIYGLDVVVIPTHRPIARKDFNDLVYLTQEEKYAAIIGDIKECQTQGRPVLVGTASIESSEYVSQLLKKEGIAHQVLNAKYHEKEAEIIAQAGRPGAVTIATNMAGRGTDILLGGNWEVEVAALENPTDEPVAQIKADWQKRHQQVIEAGGLHVIASERHESRRIDNQLRGRAGRQGDPGSSRFYLSLEDNLMRIFASDRVKNFMKALGMQAGEAIEHRMVTNAIEKAQRKVEGRNFDMRKQLLEFDDVANEQRKVIYHMRNSLLESEDIGETIAEFRREVLGAAIGQHIPPQSLPEQWDVAGLEAVLQSDFGVQLPLQQWLDEDDRLHEEALRERILEALLVAYREKEEIAGTEALRTFEKQILLRVLDDLWKDHLLTMDHLRHGIHLRGYAQKNPKQEYKRESFELFQSLLESIKRDAIRVLSHVQVRREDPAEEEERLRREAEALARRMQFQHAAASALAPQAEEDDLEVVEEVPLPGTAPVRPEPKIGRNEPCPCGSGKKYKHCHGQLN</sequence>
<evidence type="ECO:0000255" key="1">
    <source>
        <dbReference type="HAMAP-Rule" id="MF_01382"/>
    </source>
</evidence>
<evidence type="ECO:0000256" key="2">
    <source>
        <dbReference type="SAM" id="MobiDB-lite"/>
    </source>
</evidence>
<gene>
    <name evidence="1" type="primary">secA</name>
    <name type="ordered locus">Avin_13340</name>
</gene>
<protein>
    <recommendedName>
        <fullName evidence="1">Protein translocase subunit SecA</fullName>
        <ecNumber evidence="1">7.4.2.8</ecNumber>
    </recommendedName>
</protein>
<accession>C1DQA8</accession>
<dbReference type="EC" id="7.4.2.8" evidence="1"/>
<dbReference type="EMBL" id="CP001157">
    <property type="protein sequence ID" value="ACO77560.1"/>
    <property type="molecule type" value="Genomic_DNA"/>
</dbReference>
<dbReference type="RefSeq" id="WP_012699980.1">
    <property type="nucleotide sequence ID" value="NC_012560.1"/>
</dbReference>
<dbReference type="SMR" id="C1DQA8"/>
<dbReference type="STRING" id="322710.Avin_13340"/>
<dbReference type="EnsemblBacteria" id="ACO77560">
    <property type="protein sequence ID" value="ACO77560"/>
    <property type="gene ID" value="Avin_13340"/>
</dbReference>
<dbReference type="GeneID" id="88184649"/>
<dbReference type="KEGG" id="avn:Avin_13340"/>
<dbReference type="eggNOG" id="COG0653">
    <property type="taxonomic scope" value="Bacteria"/>
</dbReference>
<dbReference type="HOGENOM" id="CLU_005314_3_0_6"/>
<dbReference type="OrthoDB" id="9805579at2"/>
<dbReference type="Proteomes" id="UP000002424">
    <property type="component" value="Chromosome"/>
</dbReference>
<dbReference type="GO" id="GO:0031522">
    <property type="term" value="C:cell envelope Sec protein transport complex"/>
    <property type="evidence" value="ECO:0007669"/>
    <property type="project" value="TreeGrafter"/>
</dbReference>
<dbReference type="GO" id="GO:0005829">
    <property type="term" value="C:cytosol"/>
    <property type="evidence" value="ECO:0007669"/>
    <property type="project" value="TreeGrafter"/>
</dbReference>
<dbReference type="GO" id="GO:0005886">
    <property type="term" value="C:plasma membrane"/>
    <property type="evidence" value="ECO:0007669"/>
    <property type="project" value="UniProtKB-SubCell"/>
</dbReference>
<dbReference type="GO" id="GO:0005524">
    <property type="term" value="F:ATP binding"/>
    <property type="evidence" value="ECO:0007669"/>
    <property type="project" value="UniProtKB-UniRule"/>
</dbReference>
<dbReference type="GO" id="GO:0046872">
    <property type="term" value="F:metal ion binding"/>
    <property type="evidence" value="ECO:0007669"/>
    <property type="project" value="UniProtKB-KW"/>
</dbReference>
<dbReference type="GO" id="GO:0008564">
    <property type="term" value="F:protein-exporting ATPase activity"/>
    <property type="evidence" value="ECO:0007669"/>
    <property type="project" value="UniProtKB-EC"/>
</dbReference>
<dbReference type="GO" id="GO:0065002">
    <property type="term" value="P:intracellular protein transmembrane transport"/>
    <property type="evidence" value="ECO:0007669"/>
    <property type="project" value="UniProtKB-UniRule"/>
</dbReference>
<dbReference type="GO" id="GO:0017038">
    <property type="term" value="P:protein import"/>
    <property type="evidence" value="ECO:0007669"/>
    <property type="project" value="InterPro"/>
</dbReference>
<dbReference type="GO" id="GO:0006605">
    <property type="term" value="P:protein targeting"/>
    <property type="evidence" value="ECO:0007669"/>
    <property type="project" value="UniProtKB-UniRule"/>
</dbReference>
<dbReference type="GO" id="GO:0043952">
    <property type="term" value="P:protein transport by the Sec complex"/>
    <property type="evidence" value="ECO:0007669"/>
    <property type="project" value="TreeGrafter"/>
</dbReference>
<dbReference type="CDD" id="cd17928">
    <property type="entry name" value="DEXDc_SecA"/>
    <property type="match status" value="1"/>
</dbReference>
<dbReference type="CDD" id="cd18803">
    <property type="entry name" value="SF2_C_secA"/>
    <property type="match status" value="1"/>
</dbReference>
<dbReference type="FunFam" id="3.40.50.300:FF:000081">
    <property type="entry name" value="Preprotein translocase subunit SecA"/>
    <property type="match status" value="1"/>
</dbReference>
<dbReference type="FunFam" id="3.40.50.300:FF:000113">
    <property type="entry name" value="Preprotein translocase subunit SecA"/>
    <property type="match status" value="1"/>
</dbReference>
<dbReference type="FunFam" id="3.90.1440.10:FF:000001">
    <property type="entry name" value="Preprotein translocase subunit SecA"/>
    <property type="match status" value="1"/>
</dbReference>
<dbReference type="FunFam" id="1.10.3060.10:FF:000003">
    <property type="entry name" value="Protein translocase subunit SecA"/>
    <property type="match status" value="1"/>
</dbReference>
<dbReference type="Gene3D" id="1.10.3060.10">
    <property type="entry name" value="Helical scaffold and wing domains of SecA"/>
    <property type="match status" value="1"/>
</dbReference>
<dbReference type="Gene3D" id="3.40.50.300">
    <property type="entry name" value="P-loop containing nucleotide triphosphate hydrolases"/>
    <property type="match status" value="2"/>
</dbReference>
<dbReference type="Gene3D" id="3.90.1440.10">
    <property type="entry name" value="SecA, preprotein cross-linking domain"/>
    <property type="match status" value="1"/>
</dbReference>
<dbReference type="HAMAP" id="MF_01382">
    <property type="entry name" value="SecA"/>
    <property type="match status" value="1"/>
</dbReference>
<dbReference type="InterPro" id="IPR014001">
    <property type="entry name" value="Helicase_ATP-bd"/>
</dbReference>
<dbReference type="InterPro" id="IPR001650">
    <property type="entry name" value="Helicase_C-like"/>
</dbReference>
<dbReference type="InterPro" id="IPR027417">
    <property type="entry name" value="P-loop_NTPase"/>
</dbReference>
<dbReference type="InterPro" id="IPR004027">
    <property type="entry name" value="SEC_C_motif"/>
</dbReference>
<dbReference type="InterPro" id="IPR000185">
    <property type="entry name" value="SecA"/>
</dbReference>
<dbReference type="InterPro" id="IPR020937">
    <property type="entry name" value="SecA_CS"/>
</dbReference>
<dbReference type="InterPro" id="IPR011115">
    <property type="entry name" value="SecA_DEAD"/>
</dbReference>
<dbReference type="InterPro" id="IPR014018">
    <property type="entry name" value="SecA_motor_DEAD"/>
</dbReference>
<dbReference type="InterPro" id="IPR011130">
    <property type="entry name" value="SecA_preprotein_X-link_dom"/>
</dbReference>
<dbReference type="InterPro" id="IPR044722">
    <property type="entry name" value="SecA_SF2_C"/>
</dbReference>
<dbReference type="InterPro" id="IPR011116">
    <property type="entry name" value="SecA_Wing/Scaffold"/>
</dbReference>
<dbReference type="InterPro" id="IPR036266">
    <property type="entry name" value="SecA_Wing/Scaffold_sf"/>
</dbReference>
<dbReference type="InterPro" id="IPR036670">
    <property type="entry name" value="SecA_X-link_sf"/>
</dbReference>
<dbReference type="NCBIfam" id="NF009538">
    <property type="entry name" value="PRK12904.1"/>
    <property type="match status" value="1"/>
</dbReference>
<dbReference type="NCBIfam" id="TIGR00963">
    <property type="entry name" value="secA"/>
    <property type="match status" value="1"/>
</dbReference>
<dbReference type="PANTHER" id="PTHR30612:SF0">
    <property type="entry name" value="CHLOROPLAST PROTEIN-TRANSPORTING ATPASE"/>
    <property type="match status" value="1"/>
</dbReference>
<dbReference type="PANTHER" id="PTHR30612">
    <property type="entry name" value="SECA INNER MEMBRANE COMPONENT OF SEC PROTEIN SECRETION SYSTEM"/>
    <property type="match status" value="1"/>
</dbReference>
<dbReference type="Pfam" id="PF21090">
    <property type="entry name" value="P-loop_SecA"/>
    <property type="match status" value="1"/>
</dbReference>
<dbReference type="Pfam" id="PF02810">
    <property type="entry name" value="SEC-C"/>
    <property type="match status" value="1"/>
</dbReference>
<dbReference type="Pfam" id="PF07517">
    <property type="entry name" value="SecA_DEAD"/>
    <property type="match status" value="1"/>
</dbReference>
<dbReference type="Pfam" id="PF01043">
    <property type="entry name" value="SecA_PP_bind"/>
    <property type="match status" value="1"/>
</dbReference>
<dbReference type="Pfam" id="PF07516">
    <property type="entry name" value="SecA_SW"/>
    <property type="match status" value="1"/>
</dbReference>
<dbReference type="PRINTS" id="PR00906">
    <property type="entry name" value="SECA"/>
</dbReference>
<dbReference type="SMART" id="SM00957">
    <property type="entry name" value="SecA_DEAD"/>
    <property type="match status" value="1"/>
</dbReference>
<dbReference type="SMART" id="SM00958">
    <property type="entry name" value="SecA_PP_bind"/>
    <property type="match status" value="1"/>
</dbReference>
<dbReference type="SUPFAM" id="SSF81886">
    <property type="entry name" value="Helical scaffold and wing domains of SecA"/>
    <property type="match status" value="1"/>
</dbReference>
<dbReference type="SUPFAM" id="SSF52540">
    <property type="entry name" value="P-loop containing nucleoside triphosphate hydrolases"/>
    <property type="match status" value="2"/>
</dbReference>
<dbReference type="SUPFAM" id="SSF81767">
    <property type="entry name" value="Pre-protein crosslinking domain of SecA"/>
    <property type="match status" value="1"/>
</dbReference>
<dbReference type="PROSITE" id="PS01312">
    <property type="entry name" value="SECA"/>
    <property type="match status" value="1"/>
</dbReference>
<dbReference type="PROSITE" id="PS51196">
    <property type="entry name" value="SECA_MOTOR_DEAD"/>
    <property type="match status" value="1"/>
</dbReference>
<proteinExistence type="inferred from homology"/>
<comment type="function">
    <text evidence="1">Part of the Sec protein translocase complex. Interacts with the SecYEG preprotein conducting channel. Has a central role in coupling the hydrolysis of ATP to the transfer of proteins into and across the cell membrane, serving both as a receptor for the preprotein-SecB complex and as an ATP-driven molecular motor driving the stepwise translocation of polypeptide chains across the membrane.</text>
</comment>
<comment type="catalytic activity">
    <reaction evidence="1">
        <text>ATP + H2O + cellular proteinSide 1 = ADP + phosphate + cellular proteinSide 2.</text>
        <dbReference type="EC" id="7.4.2.8"/>
    </reaction>
</comment>
<comment type="cofactor">
    <cofactor evidence="1">
        <name>Zn(2+)</name>
        <dbReference type="ChEBI" id="CHEBI:29105"/>
    </cofactor>
    <text evidence="1">May bind 1 zinc ion per subunit.</text>
</comment>
<comment type="subunit">
    <text evidence="1">Monomer and homodimer. Part of the essential Sec protein translocation apparatus which comprises SecA, SecYEG and auxiliary proteins SecDF-YajC and YidC.</text>
</comment>
<comment type="subcellular location">
    <subcellularLocation>
        <location evidence="1">Cell inner membrane</location>
        <topology evidence="1">Peripheral membrane protein</topology>
        <orientation evidence="1">Cytoplasmic side</orientation>
    </subcellularLocation>
    <subcellularLocation>
        <location evidence="1">Cytoplasm</location>
    </subcellularLocation>
    <text evidence="1">Distribution is 50-50.</text>
</comment>
<comment type="similarity">
    <text evidence="1">Belongs to the SecA family.</text>
</comment>
<keyword id="KW-0067">ATP-binding</keyword>
<keyword id="KW-0997">Cell inner membrane</keyword>
<keyword id="KW-1003">Cell membrane</keyword>
<keyword id="KW-0963">Cytoplasm</keyword>
<keyword id="KW-0472">Membrane</keyword>
<keyword id="KW-0479">Metal-binding</keyword>
<keyword id="KW-0547">Nucleotide-binding</keyword>
<keyword id="KW-0653">Protein transport</keyword>
<keyword id="KW-1278">Translocase</keyword>
<keyword id="KW-0811">Translocation</keyword>
<keyword id="KW-0813">Transport</keyword>
<keyword id="KW-0862">Zinc</keyword>
<name>SECA_AZOVD</name>
<reference key="1">
    <citation type="journal article" date="2009" name="J. Bacteriol.">
        <title>Genome sequence of Azotobacter vinelandii, an obligate aerobe specialized to support diverse anaerobic metabolic processes.</title>
        <authorList>
            <person name="Setubal J.C."/>
            <person name="Dos Santos P."/>
            <person name="Goldman B.S."/>
            <person name="Ertesvaag H."/>
            <person name="Espin G."/>
            <person name="Rubio L.M."/>
            <person name="Valla S."/>
            <person name="Almeida N.F."/>
            <person name="Balasubramanian D."/>
            <person name="Cromes L."/>
            <person name="Curatti L."/>
            <person name="Du Z."/>
            <person name="Godsy E."/>
            <person name="Goodner B."/>
            <person name="Hellner-Burris K."/>
            <person name="Hernandez J.A."/>
            <person name="Houmiel K."/>
            <person name="Imperial J."/>
            <person name="Kennedy C."/>
            <person name="Larson T.J."/>
            <person name="Latreille P."/>
            <person name="Ligon L.S."/>
            <person name="Lu J."/>
            <person name="Maerk M."/>
            <person name="Miller N.M."/>
            <person name="Norton S."/>
            <person name="O'Carroll I.P."/>
            <person name="Paulsen I."/>
            <person name="Raulfs E.C."/>
            <person name="Roemer R."/>
            <person name="Rosser J."/>
            <person name="Segura D."/>
            <person name="Slater S."/>
            <person name="Stricklin S.L."/>
            <person name="Studholme D.J."/>
            <person name="Sun J."/>
            <person name="Viana C.J."/>
            <person name="Wallin E."/>
            <person name="Wang B."/>
            <person name="Wheeler C."/>
            <person name="Zhu H."/>
            <person name="Dean D.R."/>
            <person name="Dixon R."/>
            <person name="Wood D."/>
        </authorList>
    </citation>
    <scope>NUCLEOTIDE SEQUENCE [LARGE SCALE GENOMIC DNA]</scope>
    <source>
        <strain>DJ / ATCC BAA-1303</strain>
    </source>
</reference>
<organism>
    <name type="scientific">Azotobacter vinelandii (strain DJ / ATCC BAA-1303)</name>
    <dbReference type="NCBI Taxonomy" id="322710"/>
    <lineage>
        <taxon>Bacteria</taxon>
        <taxon>Pseudomonadati</taxon>
        <taxon>Pseudomonadota</taxon>
        <taxon>Gammaproteobacteria</taxon>
        <taxon>Pseudomonadales</taxon>
        <taxon>Pseudomonadaceae</taxon>
        <taxon>Azotobacter</taxon>
    </lineage>
</organism>
<feature type="chain" id="PRO_1000215099" description="Protein translocase subunit SecA">
    <location>
        <begin position="1"/>
        <end position="915"/>
    </location>
</feature>
<feature type="region of interest" description="Disordered" evidence="2">
    <location>
        <begin position="881"/>
        <end position="915"/>
    </location>
</feature>
<feature type="compositionally biased region" description="Basic residues" evidence="2">
    <location>
        <begin position="905"/>
        <end position="915"/>
    </location>
</feature>
<feature type="binding site" evidence="1">
    <location>
        <position position="87"/>
    </location>
    <ligand>
        <name>ATP</name>
        <dbReference type="ChEBI" id="CHEBI:30616"/>
    </ligand>
</feature>
<feature type="binding site" evidence="1">
    <location>
        <begin position="105"/>
        <end position="109"/>
    </location>
    <ligand>
        <name>ATP</name>
        <dbReference type="ChEBI" id="CHEBI:30616"/>
    </ligand>
</feature>
<feature type="binding site" evidence="1">
    <location>
        <position position="512"/>
    </location>
    <ligand>
        <name>ATP</name>
        <dbReference type="ChEBI" id="CHEBI:30616"/>
    </ligand>
</feature>
<feature type="binding site" evidence="1">
    <location>
        <position position="899"/>
    </location>
    <ligand>
        <name>Zn(2+)</name>
        <dbReference type="ChEBI" id="CHEBI:29105"/>
    </ligand>
</feature>
<feature type="binding site" evidence="1">
    <location>
        <position position="901"/>
    </location>
    <ligand>
        <name>Zn(2+)</name>
        <dbReference type="ChEBI" id="CHEBI:29105"/>
    </ligand>
</feature>
<feature type="binding site" evidence="1">
    <location>
        <position position="910"/>
    </location>
    <ligand>
        <name>Zn(2+)</name>
        <dbReference type="ChEBI" id="CHEBI:29105"/>
    </ligand>
</feature>
<feature type="binding site" evidence="1">
    <location>
        <position position="911"/>
    </location>
    <ligand>
        <name>Zn(2+)</name>
        <dbReference type="ChEBI" id="CHEBI:29105"/>
    </ligand>
</feature>